<protein>
    <recommendedName>
        <fullName>Actin, cytoplasmic 1</fullName>
        <ecNumber evidence="5">3.6.4.-</ecNumber>
    </recommendedName>
    <alternativeName>
        <fullName>Beta-actin</fullName>
    </alternativeName>
    <component>
        <recommendedName>
            <fullName>Actin, cytoplasmic 1, N-terminally processed</fullName>
        </recommendedName>
    </component>
</protein>
<feature type="chain" id="PRO_0000367091" description="Actin, cytoplasmic 1">
    <location>
        <begin position="1"/>
        <end position="375"/>
    </location>
</feature>
<feature type="initiator methionine" description="Removed; alternate" evidence="2">
    <location>
        <position position="1"/>
    </location>
</feature>
<feature type="chain" id="PRO_0000000803" description="Actin, cytoplasmic 1, N-terminally processed">
    <location>
        <begin position="2"/>
        <end position="375"/>
    </location>
</feature>
<feature type="modified residue" description="N-acetylmethionine; in Actin, cytoplasmic 1; alternate" evidence="2">
    <location>
        <position position="1"/>
    </location>
</feature>
<feature type="modified residue" description="N-acetylglutamate; in Actin, cytoplasmic 1, N-terminally processed" evidence="2">
    <location>
        <position position="2"/>
    </location>
</feature>
<feature type="modified residue" description="Methionine (R)-sulfoxide" evidence="4">
    <location>
        <position position="44"/>
    </location>
</feature>
<feature type="modified residue" description="Methionine (R)-sulfoxide" evidence="4">
    <location>
        <position position="47"/>
    </location>
</feature>
<feature type="modified residue" description="Tele-methylhistidine" evidence="4">
    <location>
        <position position="73"/>
    </location>
</feature>
<keyword id="KW-0007">Acetylation</keyword>
<keyword id="KW-0067">ATP-binding</keyword>
<keyword id="KW-0963">Cytoplasm</keyword>
<keyword id="KW-0206">Cytoskeleton</keyword>
<keyword id="KW-0378">Hydrolase</keyword>
<keyword id="KW-0488">Methylation</keyword>
<keyword id="KW-0547">Nucleotide-binding</keyword>
<keyword id="KW-0539">Nucleus</keyword>
<keyword id="KW-0558">Oxidation</keyword>
<sequence>MEDEIAALVVDNGSGMCKAGFAGDDAPRAVFPSIVGRPRHQGVMVGMGQKDSYVGDEAQSKRGILTLKYPIEHGIVTNWDDMEKIWHHTFYNELRVAPEEHPVLLTEAPLNPKANREKMTQIMFETFNTPAMYVAIQAVLSLYASGRTTGIVMDSGDGVTHTVPIYEGYALPHAILRLDLAGRDLTDYLMKILTERGYSFTTTAEREIVRDIKEKLCYVALDFEQEMGTAASSSSLEKSYELPDGQVITIGNERFRCPEALFQPSFLGMESCGIHETTYNSIMKCDVDIRKDLYANTVLSGGTTMYPGIADRMQKEITALAPSTMKIKIIAPPERKYSVWIGGSILASLSTFQQMWISKQEYDESGPSIVHRKCF</sequence>
<gene>
    <name type="primary">actb</name>
</gene>
<evidence type="ECO:0000250" key="1">
    <source>
        <dbReference type="UniProtKB" id="O93400"/>
    </source>
</evidence>
<evidence type="ECO:0000250" key="2">
    <source>
        <dbReference type="UniProtKB" id="P60706"/>
    </source>
</evidence>
<evidence type="ECO:0000250" key="3">
    <source>
        <dbReference type="UniProtKB" id="P60709"/>
    </source>
</evidence>
<evidence type="ECO:0000250" key="4">
    <source>
        <dbReference type="UniProtKB" id="P60710"/>
    </source>
</evidence>
<evidence type="ECO:0000250" key="5">
    <source>
        <dbReference type="UniProtKB" id="P68137"/>
    </source>
</evidence>
<evidence type="ECO:0000305" key="6"/>
<reference key="1">
    <citation type="submission" date="2000-01" db="EMBL/GenBank/DDBJ databases">
        <title>Cloning of Tilapia actin cDNAs.</title>
        <authorList>
            <person name="Takeuchi K."/>
        </authorList>
    </citation>
    <scope>NUCLEOTIDE SEQUENCE [MRNA]</scope>
    <source>
        <tissue>Gill</tissue>
    </source>
</reference>
<proteinExistence type="evidence at transcript level"/>
<accession>P68143</accession>
<accession>P53484</accession>
<comment type="function">
    <text evidence="3">Actin is a highly conserved protein that polymerizes to produce filaments that form cross-linked networks in the cytoplasm of cells. Actin exists in both monomeric (G-actin) and polymeric (F-actin) forms, both forms playing key functions, such as cell motility and contraction. In addition to their role in the cytoplasmic cytoskeleton, G- and F-actin also localize in the nucleus, and regulate gene transcription and motility and repair of damaged DNA.</text>
</comment>
<comment type="catalytic activity">
    <reaction evidence="5">
        <text>ATP + H2O = ADP + phosphate + H(+)</text>
        <dbReference type="Rhea" id="RHEA:13065"/>
        <dbReference type="ChEBI" id="CHEBI:15377"/>
        <dbReference type="ChEBI" id="CHEBI:15378"/>
        <dbReference type="ChEBI" id="CHEBI:30616"/>
        <dbReference type="ChEBI" id="CHEBI:43474"/>
        <dbReference type="ChEBI" id="CHEBI:456216"/>
    </reaction>
</comment>
<comment type="subunit">
    <text evidence="3 4">Polymerization of globular actin (G-actin) leads to a structural filament (F-actin) in the form of a two-stranded helix (By similarity). Each actin can bind to 4 others (By similarity).</text>
</comment>
<comment type="subcellular location">
    <subcellularLocation>
        <location evidence="4">Cytoplasm</location>
        <location evidence="4">Cytoskeleton</location>
    </subcellularLocation>
    <subcellularLocation>
        <location evidence="1">Nucleus</location>
    </subcellularLocation>
</comment>
<comment type="PTM">
    <molecule>Actin, cytoplasmic 1</molecule>
    <text evidence="3">N-terminal cleavage of acetylated methionine of immature cytoplasmic actin by ACTMAP.</text>
</comment>
<comment type="PTM">
    <text evidence="4">Oxidation of Met-44 and Met-47 by MICALs (mical1, mical2 or mical3) to form methionine sulfoxide promotes actin filament depolymerization. Mical1 and mical2 produce the (R)-S-oxide form. The (R)-S-oxide form is reverted by msrb1 and msrb2, which promote actin repolymerization.</text>
</comment>
<comment type="PTM">
    <text evidence="2">Methylation at His-73 by SETD3. Methylation stabilizes actin filaments.</text>
</comment>
<comment type="miscellaneous">
    <text evidence="1">In vertebrates 3 main groups of actin isoforms, alpha, beta and gamma have been identified. The alpha actins are found in muscle tissues and are a major constituent of the contractile apparatus. The beta and gamma actins coexist in most cell types as components of the cytoskeleton and as mediators of internal cell motility.</text>
</comment>
<comment type="similarity">
    <text evidence="6">Belongs to the actin family.</text>
</comment>
<dbReference type="EC" id="3.6.4.-" evidence="5"/>
<dbReference type="EMBL" id="AB037865">
    <property type="protein sequence ID" value="BAA90688.1"/>
    <property type="molecule type" value="mRNA"/>
</dbReference>
<dbReference type="SMR" id="P68143"/>
<dbReference type="GO" id="GO:0015629">
    <property type="term" value="C:actin cytoskeleton"/>
    <property type="evidence" value="ECO:0000250"/>
    <property type="project" value="UniProtKB"/>
</dbReference>
<dbReference type="GO" id="GO:0005856">
    <property type="term" value="C:cytoskeleton"/>
    <property type="evidence" value="ECO:0000250"/>
    <property type="project" value="AgBase"/>
</dbReference>
<dbReference type="GO" id="GO:0097433">
    <property type="term" value="C:dense body"/>
    <property type="evidence" value="ECO:0000250"/>
    <property type="project" value="AgBase"/>
</dbReference>
<dbReference type="GO" id="GO:0005925">
    <property type="term" value="C:focal adhesion"/>
    <property type="evidence" value="ECO:0000250"/>
    <property type="project" value="AgBase"/>
</dbReference>
<dbReference type="GO" id="GO:0005634">
    <property type="term" value="C:nucleus"/>
    <property type="evidence" value="ECO:0000250"/>
    <property type="project" value="UniProtKB"/>
</dbReference>
<dbReference type="GO" id="GO:0005886">
    <property type="term" value="C:plasma membrane"/>
    <property type="evidence" value="ECO:0000250"/>
    <property type="project" value="AgBase"/>
</dbReference>
<dbReference type="GO" id="GO:0005524">
    <property type="term" value="F:ATP binding"/>
    <property type="evidence" value="ECO:0007669"/>
    <property type="project" value="UniProtKB-KW"/>
</dbReference>
<dbReference type="GO" id="GO:0016787">
    <property type="term" value="F:hydrolase activity"/>
    <property type="evidence" value="ECO:0007669"/>
    <property type="project" value="UniProtKB-KW"/>
</dbReference>
<dbReference type="CDD" id="cd10224">
    <property type="entry name" value="ASKHA_NBD_actin"/>
    <property type="match status" value="1"/>
</dbReference>
<dbReference type="FunFam" id="3.30.420.40:FF:000131">
    <property type="entry name" value="Actin, alpha skeletal muscle"/>
    <property type="match status" value="1"/>
</dbReference>
<dbReference type="FunFam" id="3.30.420.40:FF:000291">
    <property type="entry name" value="Actin, alpha skeletal muscle"/>
    <property type="match status" value="1"/>
</dbReference>
<dbReference type="FunFam" id="3.90.640.10:FF:000047">
    <property type="entry name" value="Actin, alpha skeletal muscle"/>
    <property type="match status" value="1"/>
</dbReference>
<dbReference type="FunFam" id="3.30.420.40:FF:000058">
    <property type="entry name" value="Putative actin-related protein 5"/>
    <property type="match status" value="1"/>
</dbReference>
<dbReference type="Gene3D" id="3.30.420.40">
    <property type="match status" value="2"/>
</dbReference>
<dbReference type="Gene3D" id="3.90.640.10">
    <property type="entry name" value="Actin, Chain A, domain 4"/>
    <property type="match status" value="1"/>
</dbReference>
<dbReference type="InterPro" id="IPR004000">
    <property type="entry name" value="Actin"/>
</dbReference>
<dbReference type="InterPro" id="IPR020902">
    <property type="entry name" value="Actin/actin-like_CS"/>
</dbReference>
<dbReference type="InterPro" id="IPR004001">
    <property type="entry name" value="Actin_CS"/>
</dbReference>
<dbReference type="InterPro" id="IPR043129">
    <property type="entry name" value="ATPase_NBD"/>
</dbReference>
<dbReference type="PANTHER" id="PTHR11937">
    <property type="entry name" value="ACTIN"/>
    <property type="match status" value="1"/>
</dbReference>
<dbReference type="Pfam" id="PF00022">
    <property type="entry name" value="Actin"/>
    <property type="match status" value="1"/>
</dbReference>
<dbReference type="PRINTS" id="PR00190">
    <property type="entry name" value="ACTIN"/>
</dbReference>
<dbReference type="SMART" id="SM00268">
    <property type="entry name" value="ACTIN"/>
    <property type="match status" value="1"/>
</dbReference>
<dbReference type="SUPFAM" id="SSF53067">
    <property type="entry name" value="Actin-like ATPase domain"/>
    <property type="match status" value="2"/>
</dbReference>
<dbReference type="PROSITE" id="PS00406">
    <property type="entry name" value="ACTINS_1"/>
    <property type="match status" value="1"/>
</dbReference>
<dbReference type="PROSITE" id="PS00432">
    <property type="entry name" value="ACTINS_2"/>
    <property type="match status" value="1"/>
</dbReference>
<dbReference type="PROSITE" id="PS01132">
    <property type="entry name" value="ACTINS_ACT_LIKE"/>
    <property type="match status" value="1"/>
</dbReference>
<organism>
    <name type="scientific">Oreochromis mossambicus</name>
    <name type="common">Mozambique tilapia</name>
    <name type="synonym">Tilapia mossambica</name>
    <dbReference type="NCBI Taxonomy" id="8127"/>
    <lineage>
        <taxon>Eukaryota</taxon>
        <taxon>Metazoa</taxon>
        <taxon>Chordata</taxon>
        <taxon>Craniata</taxon>
        <taxon>Vertebrata</taxon>
        <taxon>Euteleostomi</taxon>
        <taxon>Actinopterygii</taxon>
        <taxon>Neopterygii</taxon>
        <taxon>Teleostei</taxon>
        <taxon>Neoteleostei</taxon>
        <taxon>Acanthomorphata</taxon>
        <taxon>Ovalentaria</taxon>
        <taxon>Cichlomorphae</taxon>
        <taxon>Cichliformes</taxon>
        <taxon>Cichlidae</taxon>
        <taxon>African cichlids</taxon>
        <taxon>Pseudocrenilabrinae</taxon>
        <taxon>Oreochromini</taxon>
        <taxon>Oreochromis</taxon>
    </lineage>
</organism>
<name>ACTB_OREMO</name>